<keyword id="KW-0249">Electron transport</keyword>
<keyword id="KW-0472">Membrane</keyword>
<keyword id="KW-0602">Photosynthesis</keyword>
<keyword id="KW-0793">Thylakoid</keyword>
<keyword id="KW-0812">Transmembrane</keyword>
<keyword id="KW-1133">Transmembrane helix</keyword>
<keyword id="KW-0813">Transport</keyword>
<organism>
    <name type="scientific">Cyanothece sp. (strain PCC 7425 / ATCC 29141)</name>
    <dbReference type="NCBI Taxonomy" id="395961"/>
    <lineage>
        <taxon>Bacteria</taxon>
        <taxon>Bacillati</taxon>
        <taxon>Cyanobacteriota</taxon>
        <taxon>Cyanophyceae</taxon>
        <taxon>Gomontiellales</taxon>
        <taxon>Cyanothecaceae</taxon>
        <taxon>Cyanothece</taxon>
    </lineage>
</organism>
<comment type="function">
    <text evidence="1">Component of the cytochrome b6-f complex, which mediates electron transfer between photosystem II (PSII) and photosystem I (PSI), cyclic electron flow around PSI, and state transitions. PetG is required for either the stability or assembly of the cytochrome b6-f complex.</text>
</comment>
<comment type="subunit">
    <text evidence="1">The 4 large subunits of the cytochrome b6-f complex are cytochrome b6, subunit IV (17 kDa polypeptide, PetD), cytochrome f and the Rieske protein, while the 4 small subunits are PetG, PetL, PetM and PetN. The complex functions as a dimer.</text>
</comment>
<comment type="subcellular location">
    <subcellularLocation>
        <location evidence="1">Cellular thylakoid membrane</location>
        <topology evidence="1">Single-pass membrane protein</topology>
    </subcellularLocation>
</comment>
<comment type="similarity">
    <text evidence="1">Belongs to the PetG family.</text>
</comment>
<gene>
    <name evidence="1" type="primary">petG</name>
    <name type="ordered locus">Cyan7425_3943</name>
</gene>
<accession>B8HUQ7</accession>
<sequence>MVEPLLCGIVLGLIPITLAGLFVAAYQQYKRGKELGV</sequence>
<evidence type="ECO:0000255" key="1">
    <source>
        <dbReference type="HAMAP-Rule" id="MF_00432"/>
    </source>
</evidence>
<dbReference type="EMBL" id="CP001344">
    <property type="protein sequence ID" value="ACL46259.1"/>
    <property type="molecule type" value="Genomic_DNA"/>
</dbReference>
<dbReference type="SMR" id="B8HUQ7"/>
<dbReference type="STRING" id="395961.Cyan7425_3943"/>
<dbReference type="KEGG" id="cyn:Cyan7425_3943"/>
<dbReference type="eggNOG" id="ENOG5033BE9">
    <property type="taxonomic scope" value="Bacteria"/>
</dbReference>
<dbReference type="HOGENOM" id="CLU_216962_0_0_3"/>
<dbReference type="OrthoDB" id="428448at2"/>
<dbReference type="GO" id="GO:0009512">
    <property type="term" value="C:cytochrome b6f complex"/>
    <property type="evidence" value="ECO:0007669"/>
    <property type="project" value="InterPro"/>
</dbReference>
<dbReference type="GO" id="GO:0031676">
    <property type="term" value="C:plasma membrane-derived thylakoid membrane"/>
    <property type="evidence" value="ECO:0007669"/>
    <property type="project" value="UniProtKB-SubCell"/>
</dbReference>
<dbReference type="GO" id="GO:0045158">
    <property type="term" value="F:electron transporter, transferring electrons within cytochrome b6/f complex of photosystem II activity"/>
    <property type="evidence" value="ECO:0007669"/>
    <property type="project" value="UniProtKB-UniRule"/>
</dbReference>
<dbReference type="GO" id="GO:0017004">
    <property type="term" value="P:cytochrome complex assembly"/>
    <property type="evidence" value="ECO:0007669"/>
    <property type="project" value="UniProtKB-UniRule"/>
</dbReference>
<dbReference type="GO" id="GO:0015979">
    <property type="term" value="P:photosynthesis"/>
    <property type="evidence" value="ECO:0007669"/>
    <property type="project" value="UniProtKB-KW"/>
</dbReference>
<dbReference type="HAMAP" id="MF_00432">
    <property type="entry name" value="Cytb6_f_PetG"/>
    <property type="match status" value="1"/>
</dbReference>
<dbReference type="InterPro" id="IPR003683">
    <property type="entry name" value="Cyt_6/f_cplx_su5"/>
</dbReference>
<dbReference type="InterPro" id="IPR036099">
    <property type="entry name" value="Cyt_6/f_cplx_su5_sf"/>
</dbReference>
<dbReference type="NCBIfam" id="NF001907">
    <property type="entry name" value="PRK00665.1"/>
    <property type="match status" value="1"/>
</dbReference>
<dbReference type="Pfam" id="PF02529">
    <property type="entry name" value="PetG"/>
    <property type="match status" value="1"/>
</dbReference>
<dbReference type="PIRSF" id="PIRSF000034">
    <property type="entry name" value="Cyt_b6-f_V"/>
    <property type="match status" value="1"/>
</dbReference>
<dbReference type="SUPFAM" id="SSF103446">
    <property type="entry name" value="PetG subunit of the cytochrome b6f complex"/>
    <property type="match status" value="1"/>
</dbReference>
<protein>
    <recommendedName>
        <fullName evidence="1">Cytochrome b6-f complex subunit 5</fullName>
    </recommendedName>
    <alternativeName>
        <fullName evidence="1">Cytochrome b6-f complex subunit PetG</fullName>
    </alternativeName>
    <alternativeName>
        <fullName evidence="1">Cytochrome b6-f complex subunit V</fullName>
    </alternativeName>
</protein>
<proteinExistence type="inferred from homology"/>
<reference key="1">
    <citation type="journal article" date="2011" name="MBio">
        <title>Novel metabolic attributes of the genus Cyanothece, comprising a group of unicellular nitrogen-fixing Cyanobacteria.</title>
        <authorList>
            <person name="Bandyopadhyay A."/>
            <person name="Elvitigala T."/>
            <person name="Welsh E."/>
            <person name="Stockel J."/>
            <person name="Liberton M."/>
            <person name="Min H."/>
            <person name="Sherman L.A."/>
            <person name="Pakrasi H.B."/>
        </authorList>
    </citation>
    <scope>NUCLEOTIDE SEQUENCE [LARGE SCALE GENOMIC DNA]</scope>
    <source>
        <strain>PCC 7425 / ATCC 29141</strain>
    </source>
</reference>
<name>PETG_CYAP4</name>
<feature type="chain" id="PRO_1000134940" description="Cytochrome b6-f complex subunit 5">
    <location>
        <begin position="1"/>
        <end position="37"/>
    </location>
</feature>
<feature type="transmembrane region" description="Helical" evidence="1">
    <location>
        <begin position="5"/>
        <end position="25"/>
    </location>
</feature>